<name>DHAR3_ARATH</name>
<keyword id="KW-0150">Chloroplast</keyword>
<keyword id="KW-0216">Detoxification</keyword>
<keyword id="KW-1015">Disulfide bond</keyword>
<keyword id="KW-0318">Glutathionylation</keyword>
<keyword id="KW-0560">Oxidoreductase</keyword>
<keyword id="KW-0934">Plastid</keyword>
<keyword id="KW-1185">Reference proteome</keyword>
<keyword id="KW-0808">Transferase</keyword>
<keyword id="KW-0809">Transit peptide</keyword>
<accession>Q8LE52</accession>
<accession>Q67XJ9</accession>
<accession>Q680W2</accession>
<accession>Q8VZA3</accession>
<accession>Q9FE30</accession>
<accession>Q9LFE6</accession>
<feature type="transit peptide" description="Chloroplast" evidence="3">
    <location>
        <begin position="1"/>
        <end position="42"/>
    </location>
</feature>
<feature type="chain" id="PRO_0000395483" description="Glutathione S-transferase DHAR3, chloroplastic">
    <location>
        <begin position="43"/>
        <end position="258"/>
    </location>
</feature>
<feature type="domain" description="GST N-terminal">
    <location>
        <begin position="56"/>
        <end position="129"/>
    </location>
</feature>
<feature type="domain" description="GST C-terminal">
    <location>
        <begin position="130"/>
        <end position="258"/>
    </location>
</feature>
<feature type="short sequence motif" description="Glutathione-binding" evidence="3">
    <location>
        <begin position="66"/>
        <end position="71"/>
    </location>
</feature>
<feature type="active site" description="Nucleophile" evidence="1">
    <location>
        <position position="66"/>
    </location>
</feature>
<feature type="binding site" evidence="1">
    <location>
        <position position="54"/>
    </location>
    <ligand>
        <name>glutathione</name>
        <dbReference type="ChEBI" id="CHEBI:57925"/>
    </ligand>
</feature>
<feature type="binding site" evidence="1">
    <location>
        <position position="54"/>
    </location>
    <ligand>
        <name>L-ascorbate</name>
        <dbReference type="ChEBI" id="CHEBI:38290"/>
    </ligand>
</feature>
<feature type="binding site" evidence="1">
    <location>
        <position position="65"/>
    </location>
    <ligand>
        <name>glutathione</name>
        <dbReference type="ChEBI" id="CHEBI:57925"/>
    </ligand>
</feature>
<feature type="binding site" evidence="1">
    <location>
        <position position="65"/>
    </location>
    <ligand>
        <name>L-ascorbate</name>
        <dbReference type="ChEBI" id="CHEBI:38290"/>
    </ligand>
</feature>
<feature type="binding site" evidence="2">
    <location>
        <position position="93"/>
    </location>
    <ligand>
        <name>glutathione</name>
        <dbReference type="ChEBI" id="CHEBI:57925"/>
    </ligand>
</feature>
<feature type="binding site" evidence="2">
    <location>
        <position position="106"/>
    </location>
    <ligand>
        <name>glutathione</name>
        <dbReference type="ChEBI" id="CHEBI:57925"/>
    </ligand>
</feature>
<feature type="binding site" evidence="2">
    <location>
        <position position="119"/>
    </location>
    <ligand>
        <name>glutathione</name>
        <dbReference type="ChEBI" id="CHEBI:57925"/>
    </ligand>
</feature>
<feature type="binding site" evidence="1">
    <location>
        <position position="205"/>
    </location>
    <ligand>
        <name>glutathione</name>
        <dbReference type="ChEBI" id="CHEBI:57925"/>
    </ligand>
</feature>
<feature type="binding site" evidence="1">
    <location>
        <position position="252"/>
    </location>
    <ligand>
        <name>glutathione</name>
        <dbReference type="ChEBI" id="CHEBI:57925"/>
    </ligand>
</feature>
<feature type="binding site" evidence="1">
    <location>
        <position position="255"/>
    </location>
    <ligand>
        <name>L-ascorbate</name>
        <dbReference type="ChEBI" id="CHEBI:38290"/>
    </ligand>
</feature>
<feature type="modified residue" description="S-glutathionyl cysteine" evidence="4">
    <location>
        <position position="52"/>
    </location>
</feature>
<feature type="disulfide bond" description="In soluble form">
    <location>
        <begin position="66"/>
        <end position="69"/>
    </location>
</feature>
<feature type="sequence conflict" description="In Ref. 4; AAL38300/AAN65072." evidence="9" ref="4">
    <original>D</original>
    <variation>Y</variation>
    <location>
        <position position="65"/>
    </location>
</feature>
<feature type="sequence conflict" description="In Ref. 5; BAD43518." evidence="9" ref="5">
    <original>N</original>
    <variation>D</variation>
    <location>
        <position position="231"/>
    </location>
</feature>
<organism>
    <name type="scientific">Arabidopsis thaliana</name>
    <name type="common">Mouse-ear cress</name>
    <dbReference type="NCBI Taxonomy" id="3702"/>
    <lineage>
        <taxon>Eukaryota</taxon>
        <taxon>Viridiplantae</taxon>
        <taxon>Streptophyta</taxon>
        <taxon>Embryophyta</taxon>
        <taxon>Tracheophyta</taxon>
        <taxon>Spermatophyta</taxon>
        <taxon>Magnoliopsida</taxon>
        <taxon>eudicotyledons</taxon>
        <taxon>Gunneridae</taxon>
        <taxon>Pentapetalae</taxon>
        <taxon>rosids</taxon>
        <taxon>malvids</taxon>
        <taxon>Brassicales</taxon>
        <taxon>Brassicaceae</taxon>
        <taxon>Camelineae</taxon>
        <taxon>Arabidopsis</taxon>
    </lineage>
</organism>
<proteinExistence type="evidence at protein level"/>
<reference key="1">
    <citation type="journal article" date="2000" name="Nature">
        <title>Sequence and analysis of chromosome 5 of the plant Arabidopsis thaliana.</title>
        <authorList>
            <person name="Tabata S."/>
            <person name="Kaneko T."/>
            <person name="Nakamura Y."/>
            <person name="Kotani H."/>
            <person name="Kato T."/>
            <person name="Asamizu E."/>
            <person name="Miyajima N."/>
            <person name="Sasamoto S."/>
            <person name="Kimura T."/>
            <person name="Hosouchi T."/>
            <person name="Kawashima K."/>
            <person name="Kohara M."/>
            <person name="Matsumoto M."/>
            <person name="Matsuno A."/>
            <person name="Muraki A."/>
            <person name="Nakayama S."/>
            <person name="Nakazaki N."/>
            <person name="Naruo K."/>
            <person name="Okumura S."/>
            <person name="Shinpo S."/>
            <person name="Takeuchi C."/>
            <person name="Wada T."/>
            <person name="Watanabe A."/>
            <person name="Yamada M."/>
            <person name="Yasuda M."/>
            <person name="Sato S."/>
            <person name="de la Bastide M."/>
            <person name="Huang E."/>
            <person name="Spiegel L."/>
            <person name="Gnoj L."/>
            <person name="O'Shaughnessy A."/>
            <person name="Preston R."/>
            <person name="Habermann K."/>
            <person name="Murray J."/>
            <person name="Johnson D."/>
            <person name="Rohlfing T."/>
            <person name="Nelson J."/>
            <person name="Stoneking T."/>
            <person name="Pepin K."/>
            <person name="Spieth J."/>
            <person name="Sekhon M."/>
            <person name="Armstrong J."/>
            <person name="Becker M."/>
            <person name="Belter E."/>
            <person name="Cordum H."/>
            <person name="Cordes M."/>
            <person name="Courtney L."/>
            <person name="Courtney W."/>
            <person name="Dante M."/>
            <person name="Du H."/>
            <person name="Edwards J."/>
            <person name="Fryman J."/>
            <person name="Haakensen B."/>
            <person name="Lamar E."/>
            <person name="Latreille P."/>
            <person name="Leonard S."/>
            <person name="Meyer R."/>
            <person name="Mulvaney E."/>
            <person name="Ozersky P."/>
            <person name="Riley A."/>
            <person name="Strowmatt C."/>
            <person name="Wagner-McPherson C."/>
            <person name="Wollam A."/>
            <person name="Yoakum M."/>
            <person name="Bell M."/>
            <person name="Dedhia N."/>
            <person name="Parnell L."/>
            <person name="Shah R."/>
            <person name="Rodriguez M."/>
            <person name="Hoon See L."/>
            <person name="Vil D."/>
            <person name="Baker J."/>
            <person name="Kirchoff K."/>
            <person name="Toth K."/>
            <person name="King L."/>
            <person name="Bahret A."/>
            <person name="Miller B."/>
            <person name="Marra M.A."/>
            <person name="Martienssen R."/>
            <person name="McCombie W.R."/>
            <person name="Wilson R.K."/>
            <person name="Murphy G."/>
            <person name="Bancroft I."/>
            <person name="Volckaert G."/>
            <person name="Wambutt R."/>
            <person name="Duesterhoeft A."/>
            <person name="Stiekema W."/>
            <person name="Pohl T."/>
            <person name="Entian K.-D."/>
            <person name="Terryn N."/>
            <person name="Hartley N."/>
            <person name="Bent E."/>
            <person name="Johnson S."/>
            <person name="Langham S.-A."/>
            <person name="McCullagh B."/>
            <person name="Robben J."/>
            <person name="Grymonprez B."/>
            <person name="Zimmermann W."/>
            <person name="Ramsperger U."/>
            <person name="Wedler H."/>
            <person name="Balke K."/>
            <person name="Wedler E."/>
            <person name="Peters S."/>
            <person name="van Staveren M."/>
            <person name="Dirkse W."/>
            <person name="Mooijman P."/>
            <person name="Klein Lankhorst R."/>
            <person name="Weitzenegger T."/>
            <person name="Bothe G."/>
            <person name="Rose M."/>
            <person name="Hauf J."/>
            <person name="Berneiser S."/>
            <person name="Hempel S."/>
            <person name="Feldpausch M."/>
            <person name="Lamberth S."/>
            <person name="Villarroel R."/>
            <person name="Gielen J."/>
            <person name="Ardiles W."/>
            <person name="Bents O."/>
            <person name="Lemcke K."/>
            <person name="Kolesov G."/>
            <person name="Mayer K.F.X."/>
            <person name="Rudd S."/>
            <person name="Schoof H."/>
            <person name="Schueller C."/>
            <person name="Zaccaria P."/>
            <person name="Mewes H.-W."/>
            <person name="Bevan M."/>
            <person name="Fransz P.F."/>
        </authorList>
    </citation>
    <scope>NUCLEOTIDE SEQUENCE [LARGE SCALE GENOMIC DNA]</scope>
    <source>
        <strain>cv. Columbia</strain>
    </source>
</reference>
<reference key="2">
    <citation type="journal article" date="2017" name="Plant J.">
        <title>Araport11: a complete reannotation of the Arabidopsis thaliana reference genome.</title>
        <authorList>
            <person name="Cheng C.Y."/>
            <person name="Krishnakumar V."/>
            <person name="Chan A.P."/>
            <person name="Thibaud-Nissen F."/>
            <person name="Schobel S."/>
            <person name="Town C.D."/>
        </authorList>
    </citation>
    <scope>GENOME REANNOTATION</scope>
    <source>
        <strain>cv. Columbia</strain>
    </source>
</reference>
<reference key="3">
    <citation type="journal article" date="2002" name="Science">
        <title>Functional annotation of a full-length Arabidopsis cDNA collection.</title>
        <authorList>
            <person name="Seki M."/>
            <person name="Narusaka M."/>
            <person name="Kamiya A."/>
            <person name="Ishida J."/>
            <person name="Satou M."/>
            <person name="Sakurai T."/>
            <person name="Nakajima M."/>
            <person name="Enju A."/>
            <person name="Akiyama K."/>
            <person name="Oono Y."/>
            <person name="Muramatsu M."/>
            <person name="Hayashizaki Y."/>
            <person name="Kawai J."/>
            <person name="Carninci P."/>
            <person name="Itoh M."/>
            <person name="Ishii Y."/>
            <person name="Arakawa T."/>
            <person name="Shibata K."/>
            <person name="Shinagawa A."/>
            <person name="Shinozaki K."/>
        </authorList>
    </citation>
    <scope>NUCLEOTIDE SEQUENCE [LARGE SCALE MRNA]</scope>
    <source>
        <strain>cv. Columbia</strain>
    </source>
</reference>
<reference key="4">
    <citation type="journal article" date="2003" name="Science">
        <title>Empirical analysis of transcriptional activity in the Arabidopsis genome.</title>
        <authorList>
            <person name="Yamada K."/>
            <person name="Lim J."/>
            <person name="Dale J.M."/>
            <person name="Chen H."/>
            <person name="Shinn P."/>
            <person name="Palm C.J."/>
            <person name="Southwick A.M."/>
            <person name="Wu H.C."/>
            <person name="Kim C.J."/>
            <person name="Nguyen M."/>
            <person name="Pham P.K."/>
            <person name="Cheuk R.F."/>
            <person name="Karlin-Newmann G."/>
            <person name="Liu S.X."/>
            <person name="Lam B."/>
            <person name="Sakano H."/>
            <person name="Wu T."/>
            <person name="Yu G."/>
            <person name="Miranda M."/>
            <person name="Quach H.L."/>
            <person name="Tripp M."/>
            <person name="Chang C.H."/>
            <person name="Lee J.M."/>
            <person name="Toriumi M.J."/>
            <person name="Chan M.M."/>
            <person name="Tang C.C."/>
            <person name="Onodera C.S."/>
            <person name="Deng J.M."/>
            <person name="Akiyama K."/>
            <person name="Ansari Y."/>
            <person name="Arakawa T."/>
            <person name="Banh J."/>
            <person name="Banno F."/>
            <person name="Bowser L."/>
            <person name="Brooks S.Y."/>
            <person name="Carninci P."/>
            <person name="Chao Q."/>
            <person name="Choy N."/>
            <person name="Enju A."/>
            <person name="Goldsmith A.D."/>
            <person name="Gurjal M."/>
            <person name="Hansen N.F."/>
            <person name="Hayashizaki Y."/>
            <person name="Johnson-Hopson C."/>
            <person name="Hsuan V.W."/>
            <person name="Iida K."/>
            <person name="Karnes M."/>
            <person name="Khan S."/>
            <person name="Koesema E."/>
            <person name="Ishida J."/>
            <person name="Jiang P.X."/>
            <person name="Jones T."/>
            <person name="Kawai J."/>
            <person name="Kamiya A."/>
            <person name="Meyers C."/>
            <person name="Nakajima M."/>
            <person name="Narusaka M."/>
            <person name="Seki M."/>
            <person name="Sakurai T."/>
            <person name="Satou M."/>
            <person name="Tamse R."/>
            <person name="Vaysberg M."/>
            <person name="Wallender E.K."/>
            <person name="Wong C."/>
            <person name="Yamamura Y."/>
            <person name="Yuan S."/>
            <person name="Shinozaki K."/>
            <person name="Davis R.W."/>
            <person name="Theologis A."/>
            <person name="Ecker J.R."/>
        </authorList>
    </citation>
    <scope>NUCLEOTIDE SEQUENCE [LARGE SCALE MRNA]</scope>
    <source>
        <strain>cv. Columbia</strain>
    </source>
</reference>
<reference key="5">
    <citation type="submission" date="2004-09" db="EMBL/GenBank/DDBJ databases">
        <title>Large-scale analysis of RIKEN Arabidopsis full-length (RAFL) cDNAs.</title>
        <authorList>
            <person name="Totoki Y."/>
            <person name="Seki M."/>
            <person name="Ishida J."/>
            <person name="Nakajima M."/>
            <person name="Enju A."/>
            <person name="Kamiya A."/>
            <person name="Narusaka M."/>
            <person name="Shin-i T."/>
            <person name="Nakagawa M."/>
            <person name="Sakamoto N."/>
            <person name="Oishi K."/>
            <person name="Kohara Y."/>
            <person name="Kobayashi M."/>
            <person name="Toyoda A."/>
            <person name="Sakaki Y."/>
            <person name="Sakurai T."/>
            <person name="Iida K."/>
            <person name="Akiyama K."/>
            <person name="Satou M."/>
            <person name="Toyoda T."/>
            <person name="Konagaya A."/>
            <person name="Carninci P."/>
            <person name="Kawai J."/>
            <person name="Hayashizaki Y."/>
            <person name="Shinozaki K."/>
        </authorList>
    </citation>
    <scope>NUCLEOTIDE SEQUENCE [LARGE SCALE MRNA]</scope>
    <source>
        <strain>cv. Columbia</strain>
    </source>
</reference>
<reference key="6">
    <citation type="submission" date="2002-03" db="EMBL/GenBank/DDBJ databases">
        <title>Full-length cDNA from Arabidopsis thaliana.</title>
        <authorList>
            <person name="Brover V.V."/>
            <person name="Troukhan M.E."/>
            <person name="Alexandrov N.A."/>
            <person name="Lu Y.-P."/>
            <person name="Flavell R.B."/>
            <person name="Feldmann K.A."/>
        </authorList>
    </citation>
    <scope>NUCLEOTIDE SEQUENCE [LARGE SCALE MRNA]</scope>
</reference>
<reference key="7">
    <citation type="journal article" date="2000" name="Plant Cell Physiol.">
        <title>Purification and characterization of chloroplast dehydroascorbate reductase from spinach leaves.</title>
        <authorList>
            <person name="Shimaoka T."/>
            <person name="Yokota A."/>
            <person name="Miyake C."/>
        </authorList>
    </citation>
    <scope>NUCLEOTIDE SEQUENCE [MRNA] OF 7-258</scope>
    <source>
        <strain>cv. Columbia</strain>
    </source>
</reference>
<reference key="8">
    <citation type="submission" date="2000-08" db="EMBL/GenBank/DDBJ databases">
        <title>Cloning of a chloroplast dehydroascorbate reductase from Arabidopsis thaliana.</title>
        <authorList>
            <person name="Creissen G."/>
        </authorList>
    </citation>
    <scope>NUCLEOTIDE SEQUENCE [MRNA] OF 7-258</scope>
</reference>
<reference key="9">
    <citation type="journal article" date="2002" name="J. Biol. Chem.">
        <title>Functional divergence in the glutathione transferase superfamily in plants. Identification of two classes with putative functions in redox homeostasis in Arabidopsis thaliana.</title>
        <authorList>
            <person name="Dixon D.P."/>
            <person name="Davis B.G."/>
            <person name="Edwards R."/>
        </authorList>
    </citation>
    <scope>GENE FAMILY</scope>
    <scope>IDENTIFICATION BY MASS SPECTROMETRY</scope>
    <scope>FUNCTION</scope>
    <scope>BIOPHYSICOCHEMICAL PROPERTIES</scope>
    <scope>GLUTATHIONYLATION AT CYS-52</scope>
</reference>
<reference key="10">
    <citation type="journal article" date="2004" name="Proteomics">
        <title>New targets of Arabidopsis thioredoxins revealed by proteomic analysis.</title>
        <authorList>
            <person name="Marchand C."/>
            <person name="Le Marechal P."/>
            <person name="Meyer Y."/>
            <person name="Miginiac-Maslow M."/>
            <person name="Issakidis-Bourguet E."/>
            <person name="Decottignies P."/>
        </authorList>
    </citation>
    <scope>IDENTIFICATION BY MASS SPECTROMETRY</scope>
    <scope>INTERACTION WITH TRX3</scope>
</reference>
<reference key="11">
    <citation type="journal article" date="2008" name="PLoS ONE">
        <title>Sorting signals, N-terminal modifications and abundance of the chloroplast proteome.</title>
        <authorList>
            <person name="Zybailov B."/>
            <person name="Rutschow H."/>
            <person name="Friso G."/>
            <person name="Rudella A."/>
            <person name="Emanuelsson O."/>
            <person name="Sun Q."/>
            <person name="van Wijk K.J."/>
        </authorList>
    </citation>
    <scope>IDENTIFICATION BY MASS SPECTROMETRY</scope>
    <scope>SUBCELLULAR LOCATION [LARGE SCALE ANALYSIS]</scope>
</reference>
<reference key="12">
    <citation type="journal article" date="2009" name="J. Exp. Bot.">
        <title>Enzyme activities and subcellular localization of members of the Arabidopsis glutathione transferase superfamily.</title>
        <authorList>
            <person name="Dixon D.P."/>
            <person name="Hawkins T."/>
            <person name="Hussey P.J."/>
            <person name="Edwards R."/>
        </authorList>
    </citation>
    <scope>SUBCELLULAR LOCATION</scope>
</reference>
<sequence>MISLRFQPSTTAGVLSASVSRAGFIKRCGSTKPGRVGRFVTMATAASPLEICVKASITTPNKLGDCPFCQKVLLTMEEKNVPYDMKMVDLSNKPEWFLKISPEGKVPVVKFDEKWVPDSDVITQALEEKYPEPPLATPPEKASVGSKIFSTFVGFLKSKDSGDGTEQVLLDELTTFNDYIKDNGPFINGEKISAADLSLAPKLYHMKIALGHYKNWSVPDSLPFVKSYMENVFSRESFTNTRAETEDVIAGWRPKVMG</sequence>
<comment type="function">
    <text evidence="2 4">Displays a dual function. As a soluble protein, exhibits glutathione-dependent thiol transferase and dehydroascorbate (DHA) reductase activities (PubMed:12077129). Key component of the ascorbate recycling system. Involved in the redox homeostasis, especially in scavenging of ROS under oxidative stresses (By similarity).</text>
</comment>
<comment type="catalytic activity">
    <reaction evidence="4">
        <text>RX + glutathione = an S-substituted glutathione + a halide anion + H(+)</text>
        <dbReference type="Rhea" id="RHEA:16437"/>
        <dbReference type="ChEBI" id="CHEBI:15378"/>
        <dbReference type="ChEBI" id="CHEBI:16042"/>
        <dbReference type="ChEBI" id="CHEBI:17792"/>
        <dbReference type="ChEBI" id="CHEBI:57925"/>
        <dbReference type="ChEBI" id="CHEBI:90779"/>
        <dbReference type="EC" id="2.5.1.18"/>
    </reaction>
</comment>
<comment type="catalytic activity">
    <reaction evidence="4">
        <text>L-dehydroascorbate + 2 glutathione = glutathione disulfide + L-ascorbate</text>
        <dbReference type="Rhea" id="RHEA:24424"/>
        <dbReference type="ChEBI" id="CHEBI:38290"/>
        <dbReference type="ChEBI" id="CHEBI:57925"/>
        <dbReference type="ChEBI" id="CHEBI:58297"/>
        <dbReference type="ChEBI" id="CHEBI:58539"/>
        <dbReference type="EC" id="1.8.5.1"/>
    </reaction>
</comment>
<comment type="biophysicochemical properties">
    <kinetics>
        <KM evidence="4">0.5 mM for DHA (at pH 6.5 and 30 degrees Celsius)</KM>
        <KM evidence="4">10 mM for GSH (at pH 6.5 and 30 degrees Celsius)</KM>
    </kinetics>
</comment>
<comment type="subunit">
    <text evidence="2 5">Monomer (By similarity). Interacts with TRX3.</text>
</comment>
<comment type="subcellular location">
    <subcellularLocation>
        <location evidence="6 7">Plastid</location>
        <location evidence="6 7">Chloroplast stroma</location>
    </subcellularLocation>
</comment>
<comment type="PTM">
    <text evidence="4">Partial S-glutathionylation and intramolecular disulfide bond formation between Cys-66 and Cys-69 in the presence of oxidized glutathione (GSSG). Could be reduced by TRX-dependent process.</text>
</comment>
<comment type="similarity">
    <text evidence="9">Belongs to the GST superfamily. DHAR family.</text>
</comment>
<comment type="sequence caution" evidence="9">
    <conflict type="erroneous gene model prediction">
        <sequence resource="EMBL-CDS" id="CAC01835"/>
    </conflict>
    <text>The predicted gene has been split into 2 genes: At5g16710 and At5g16715.</text>
</comment>
<gene>
    <name type="primary">DHAR3</name>
    <name type="ordered locus">At5g16710</name>
    <name type="ORF">F5E19.50</name>
</gene>
<dbReference type="EC" id="2.5.1.18" evidence="4"/>
<dbReference type="EC" id="1.8.5.1" evidence="4"/>
<dbReference type="EMBL" id="AL391147">
    <property type="protein sequence ID" value="CAC01835.1"/>
    <property type="status" value="ALT_SEQ"/>
    <property type="molecule type" value="Genomic_DNA"/>
</dbReference>
<dbReference type="EMBL" id="CP002688">
    <property type="protein sequence ID" value="AED92328.1"/>
    <property type="molecule type" value="Genomic_DNA"/>
</dbReference>
<dbReference type="EMBL" id="AK118603">
    <property type="protein sequence ID" value="BAC43202.1"/>
    <property type="molecule type" value="mRNA"/>
</dbReference>
<dbReference type="EMBL" id="AY065124">
    <property type="protein sequence ID" value="AAL38300.1"/>
    <property type="molecule type" value="mRNA"/>
</dbReference>
<dbReference type="EMBL" id="BT001185">
    <property type="protein sequence ID" value="AAN65072.1"/>
    <property type="molecule type" value="mRNA"/>
</dbReference>
<dbReference type="EMBL" id="AK175537">
    <property type="protein sequence ID" value="BAD43300.1"/>
    <property type="molecule type" value="mRNA"/>
</dbReference>
<dbReference type="EMBL" id="AK175755">
    <property type="protein sequence ID" value="BAD43518.1"/>
    <property type="molecule type" value="mRNA"/>
</dbReference>
<dbReference type="EMBL" id="AK175798">
    <property type="protein sequence ID" value="BAD43561.1"/>
    <property type="molecule type" value="mRNA"/>
</dbReference>
<dbReference type="EMBL" id="AK176039">
    <property type="protein sequence ID" value="BAD43802.1"/>
    <property type="molecule type" value="mRNA"/>
</dbReference>
<dbReference type="EMBL" id="AK176071">
    <property type="protein sequence ID" value="BAD43834.1"/>
    <property type="molecule type" value="mRNA"/>
</dbReference>
<dbReference type="EMBL" id="AK176708">
    <property type="protein sequence ID" value="BAD44471.1"/>
    <property type="molecule type" value="mRNA"/>
</dbReference>
<dbReference type="EMBL" id="AK176820">
    <property type="protein sequence ID" value="BAD44583.1"/>
    <property type="molecule type" value="mRNA"/>
</dbReference>
<dbReference type="EMBL" id="AK176870">
    <property type="protein sequence ID" value="BAD44633.1"/>
    <property type="molecule type" value="mRNA"/>
</dbReference>
<dbReference type="EMBL" id="AY085616">
    <property type="protein sequence ID" value="AAM62837.1"/>
    <property type="molecule type" value="mRNA"/>
</dbReference>
<dbReference type="EMBL" id="AF195887">
    <property type="protein sequence ID" value="AAG24946.1"/>
    <property type="molecule type" value="mRNA"/>
</dbReference>
<dbReference type="EMBL" id="AF301597">
    <property type="protein sequence ID" value="AAG40196.1"/>
    <property type="molecule type" value="mRNA"/>
</dbReference>
<dbReference type="PIR" id="T51503">
    <property type="entry name" value="T51503"/>
</dbReference>
<dbReference type="RefSeq" id="NP_568336.1">
    <property type="nucleotide sequence ID" value="NM_121676.4"/>
</dbReference>
<dbReference type="SMR" id="Q8LE52"/>
<dbReference type="BioGRID" id="16808">
    <property type="interactions" value="1"/>
</dbReference>
<dbReference type="FunCoup" id="Q8LE52">
    <property type="interactions" value="1766"/>
</dbReference>
<dbReference type="IntAct" id="Q8LE52">
    <property type="interactions" value="1"/>
</dbReference>
<dbReference type="STRING" id="3702.Q8LE52"/>
<dbReference type="GlyGen" id="Q8LE52">
    <property type="glycosylation" value="1 site"/>
</dbReference>
<dbReference type="iPTMnet" id="Q8LE52"/>
<dbReference type="MetOSite" id="Q8LE52"/>
<dbReference type="PaxDb" id="3702-AT5G16710.1"/>
<dbReference type="ProteomicsDB" id="224057"/>
<dbReference type="EnsemblPlants" id="AT5G16710.1">
    <property type="protein sequence ID" value="AT5G16710.1"/>
    <property type="gene ID" value="AT5G16710"/>
</dbReference>
<dbReference type="GeneID" id="831532"/>
<dbReference type="Gramene" id="AT5G16710.1">
    <property type="protein sequence ID" value="AT5G16710.1"/>
    <property type="gene ID" value="AT5G16710"/>
</dbReference>
<dbReference type="KEGG" id="ath:AT5G16710"/>
<dbReference type="Araport" id="AT5G16710"/>
<dbReference type="TAIR" id="AT5G16710">
    <property type="gene designation" value="DHAR3"/>
</dbReference>
<dbReference type="eggNOG" id="KOG1422">
    <property type="taxonomic scope" value="Eukaryota"/>
</dbReference>
<dbReference type="HOGENOM" id="CLU_011226_1_0_1"/>
<dbReference type="InParanoid" id="Q8LE52"/>
<dbReference type="OMA" id="SYMKAIF"/>
<dbReference type="OrthoDB" id="1935530at2759"/>
<dbReference type="PhylomeDB" id="Q8LE52"/>
<dbReference type="BioCyc" id="ARA:AT5G16710-MONOMER"/>
<dbReference type="SABIO-RK" id="Q8LE52"/>
<dbReference type="PRO" id="PR:Q8LE52"/>
<dbReference type="Proteomes" id="UP000006548">
    <property type="component" value="Chromosome 5"/>
</dbReference>
<dbReference type="ExpressionAtlas" id="Q8LE52">
    <property type="expression patterns" value="baseline and differential"/>
</dbReference>
<dbReference type="GO" id="GO:0009507">
    <property type="term" value="C:chloroplast"/>
    <property type="evidence" value="ECO:0000314"/>
    <property type="project" value="TAIR"/>
</dbReference>
<dbReference type="GO" id="GO:0009941">
    <property type="term" value="C:chloroplast envelope"/>
    <property type="evidence" value="ECO:0007005"/>
    <property type="project" value="TAIR"/>
</dbReference>
<dbReference type="GO" id="GO:0009570">
    <property type="term" value="C:chloroplast stroma"/>
    <property type="evidence" value="ECO:0007005"/>
    <property type="project" value="TAIR"/>
</dbReference>
<dbReference type="GO" id="GO:0009536">
    <property type="term" value="C:plastid"/>
    <property type="evidence" value="ECO:0007005"/>
    <property type="project" value="TAIR"/>
</dbReference>
<dbReference type="GO" id="GO:0045174">
    <property type="term" value="F:glutathione dehydrogenase (ascorbate) activity"/>
    <property type="evidence" value="ECO:0000314"/>
    <property type="project" value="TAIR"/>
</dbReference>
<dbReference type="GO" id="GO:0004364">
    <property type="term" value="F:glutathione transferase activity"/>
    <property type="evidence" value="ECO:0007669"/>
    <property type="project" value="UniProtKB-EC"/>
</dbReference>
<dbReference type="GO" id="GO:0140547">
    <property type="term" value="P:acquisition of seed longevity"/>
    <property type="evidence" value="ECO:0000316"/>
    <property type="project" value="TAIR"/>
</dbReference>
<dbReference type="GO" id="GO:0033355">
    <property type="term" value="P:ascorbate glutathione cycle"/>
    <property type="evidence" value="ECO:0007669"/>
    <property type="project" value="InterPro"/>
</dbReference>
<dbReference type="GO" id="GO:0019852">
    <property type="term" value="P:L-ascorbic acid metabolic process"/>
    <property type="evidence" value="ECO:0000316"/>
    <property type="project" value="TAIR"/>
</dbReference>
<dbReference type="GO" id="GO:0010731">
    <property type="term" value="P:protein glutathionylation"/>
    <property type="evidence" value="ECO:0000314"/>
    <property type="project" value="TAIR"/>
</dbReference>
<dbReference type="CDD" id="cd03201">
    <property type="entry name" value="GST_C_DHAR"/>
    <property type="match status" value="1"/>
</dbReference>
<dbReference type="CDD" id="cd00570">
    <property type="entry name" value="GST_N_family"/>
    <property type="match status" value="1"/>
</dbReference>
<dbReference type="FunFam" id="3.40.30.10:FF:000102">
    <property type="entry name" value="Glutathione S-transferase DHAR3 chloroplastic"/>
    <property type="match status" value="1"/>
</dbReference>
<dbReference type="FunFam" id="1.20.1050.10:FF:000029">
    <property type="entry name" value="Glutathione S-transferase DHAR3, chloroplastic"/>
    <property type="match status" value="1"/>
</dbReference>
<dbReference type="Gene3D" id="1.20.1050.10">
    <property type="match status" value="1"/>
</dbReference>
<dbReference type="Gene3D" id="3.40.30.10">
    <property type="entry name" value="Glutaredoxin"/>
    <property type="match status" value="1"/>
</dbReference>
<dbReference type="InterPro" id="IPR044627">
    <property type="entry name" value="DHAR1/2/3/4"/>
</dbReference>
<dbReference type="InterPro" id="IPR036282">
    <property type="entry name" value="Glutathione-S-Trfase_C_sf"/>
</dbReference>
<dbReference type="InterPro" id="IPR040079">
    <property type="entry name" value="Glutathione_S-Trfase"/>
</dbReference>
<dbReference type="InterPro" id="IPR004045">
    <property type="entry name" value="Glutathione_S-Trfase_N"/>
</dbReference>
<dbReference type="InterPro" id="IPR036249">
    <property type="entry name" value="Thioredoxin-like_sf"/>
</dbReference>
<dbReference type="PANTHER" id="PTHR44420">
    <property type="entry name" value="GLUTATHIONE S-TRANSFERASE DHAR2-RELATED"/>
    <property type="match status" value="1"/>
</dbReference>
<dbReference type="PANTHER" id="PTHR44420:SF1">
    <property type="entry name" value="GLUTATHIONE S-TRANSFERASE DHAR3, CHLOROPLASTIC"/>
    <property type="match status" value="1"/>
</dbReference>
<dbReference type="Pfam" id="PF13410">
    <property type="entry name" value="GST_C_2"/>
    <property type="match status" value="1"/>
</dbReference>
<dbReference type="Pfam" id="PF13409">
    <property type="entry name" value="GST_N_2"/>
    <property type="match status" value="1"/>
</dbReference>
<dbReference type="SFLD" id="SFLDS00019">
    <property type="entry name" value="Glutathione_Transferase_(cytos"/>
    <property type="match status" value="1"/>
</dbReference>
<dbReference type="SFLD" id="SFLDG00358">
    <property type="entry name" value="Main_(cytGST)"/>
    <property type="match status" value="1"/>
</dbReference>
<dbReference type="SUPFAM" id="SSF47616">
    <property type="entry name" value="GST C-terminal domain-like"/>
    <property type="match status" value="1"/>
</dbReference>
<dbReference type="SUPFAM" id="SSF52833">
    <property type="entry name" value="Thioredoxin-like"/>
    <property type="match status" value="1"/>
</dbReference>
<dbReference type="PROSITE" id="PS50405">
    <property type="entry name" value="GST_CTER"/>
    <property type="match status" value="1"/>
</dbReference>
<dbReference type="PROSITE" id="PS50404">
    <property type="entry name" value="GST_NTER"/>
    <property type="match status" value="1"/>
</dbReference>
<evidence type="ECO:0000250" key="1">
    <source>
        <dbReference type="UniProtKB" id="Q65XA0"/>
    </source>
</evidence>
<evidence type="ECO:0000250" key="2">
    <source>
        <dbReference type="UniProtKB" id="Q9FWR4"/>
    </source>
</evidence>
<evidence type="ECO:0000255" key="3"/>
<evidence type="ECO:0000269" key="4">
    <source>
    </source>
</evidence>
<evidence type="ECO:0000269" key="5">
    <source>
    </source>
</evidence>
<evidence type="ECO:0000269" key="6">
    <source>
    </source>
</evidence>
<evidence type="ECO:0000269" key="7">
    <source>
    </source>
</evidence>
<evidence type="ECO:0000303" key="8">
    <source>
    </source>
</evidence>
<evidence type="ECO:0000305" key="9"/>
<protein>
    <recommendedName>
        <fullName>Glutathione S-transferase DHAR3, chloroplastic</fullName>
        <ecNumber evidence="4">2.5.1.18</ecNumber>
    </recommendedName>
    <alternativeName>
        <fullName>Chloride intracellular channel homolog 3</fullName>
        <shortName>CLIC homolog 3</shortName>
    </alternativeName>
    <alternativeName>
        <fullName evidence="8">Glutathione-dependent dehydroascorbate reductase 3</fullName>
        <shortName evidence="8">AtDHAR3</shortName>
        <shortName>ChlDHAR</shortName>
        <shortName>GSH-dependent dehydroascorbate reductase 3</shortName>
        <ecNumber evidence="4">1.8.5.1</ecNumber>
    </alternativeName>
</protein>